<feature type="chain" id="PRO_1000114745" description="Potassium-transporting ATPase KdpC subunit">
    <location>
        <begin position="1"/>
        <end position="201"/>
    </location>
</feature>
<feature type="transmembrane region" description="Helical" evidence="1">
    <location>
        <begin position="7"/>
        <end position="27"/>
    </location>
</feature>
<evidence type="ECO:0000255" key="1">
    <source>
        <dbReference type="HAMAP-Rule" id="MF_00276"/>
    </source>
</evidence>
<sequence>MLKELRPAFVVLIALTALTGLAYPLAMTGAAQVLFPRQANGSLVTREGTVIGSALIGQNFTSARYFHGRPSATTDADPADATKTIPAPYNAANSMGSNLGPTNPALADRVKADLDALRAENPRDPVPVDLVTASGSGLDPHISPEAALFQVPRVARARGLNEGVVRRLVEENVEDRTLGLLGEPRVNVLALNLALDKARPQ</sequence>
<accession>A7IKC3</accession>
<comment type="function">
    <text evidence="1">Part of the high-affinity ATP-driven potassium transport (or Kdp) system, which catalyzes the hydrolysis of ATP coupled with the electrogenic transport of potassium into the cytoplasm. This subunit acts as a catalytic chaperone that increases the ATP-binding affinity of the ATP-hydrolyzing subunit KdpB by the formation of a transient KdpB/KdpC/ATP ternary complex.</text>
</comment>
<comment type="subunit">
    <text evidence="1">The system is composed of three essential subunits: KdpA, KdpB and KdpC.</text>
</comment>
<comment type="subcellular location">
    <subcellularLocation>
        <location evidence="1">Cell inner membrane</location>
        <topology evidence="1">Single-pass membrane protein</topology>
    </subcellularLocation>
</comment>
<comment type="similarity">
    <text evidence="1">Belongs to the KdpC family.</text>
</comment>
<name>KDPC_XANP2</name>
<gene>
    <name evidence="1" type="primary">kdpC</name>
    <name type="ordered locus">Xaut_3237</name>
</gene>
<reference key="1">
    <citation type="submission" date="2007-07" db="EMBL/GenBank/DDBJ databases">
        <title>Complete sequence of chromosome of Xanthobacter autotrophicus Py2.</title>
        <authorList>
            <consortium name="US DOE Joint Genome Institute"/>
            <person name="Copeland A."/>
            <person name="Lucas S."/>
            <person name="Lapidus A."/>
            <person name="Barry K."/>
            <person name="Glavina del Rio T."/>
            <person name="Hammon N."/>
            <person name="Israni S."/>
            <person name="Dalin E."/>
            <person name="Tice H."/>
            <person name="Pitluck S."/>
            <person name="Sims D."/>
            <person name="Brettin T."/>
            <person name="Bruce D."/>
            <person name="Detter J.C."/>
            <person name="Han C."/>
            <person name="Tapia R."/>
            <person name="Brainard J."/>
            <person name="Schmutz J."/>
            <person name="Larimer F."/>
            <person name="Land M."/>
            <person name="Hauser L."/>
            <person name="Kyrpides N."/>
            <person name="Kim E."/>
            <person name="Ensigns S.A."/>
            <person name="Richardson P."/>
        </authorList>
    </citation>
    <scope>NUCLEOTIDE SEQUENCE [LARGE SCALE GENOMIC DNA]</scope>
    <source>
        <strain>ATCC BAA-1158 / Py2</strain>
    </source>
</reference>
<proteinExistence type="inferred from homology"/>
<keyword id="KW-0067">ATP-binding</keyword>
<keyword id="KW-0997">Cell inner membrane</keyword>
<keyword id="KW-1003">Cell membrane</keyword>
<keyword id="KW-0406">Ion transport</keyword>
<keyword id="KW-0472">Membrane</keyword>
<keyword id="KW-0547">Nucleotide-binding</keyword>
<keyword id="KW-0630">Potassium</keyword>
<keyword id="KW-0633">Potassium transport</keyword>
<keyword id="KW-1185">Reference proteome</keyword>
<keyword id="KW-0812">Transmembrane</keyword>
<keyword id="KW-1133">Transmembrane helix</keyword>
<keyword id="KW-0813">Transport</keyword>
<dbReference type="EMBL" id="CP000781">
    <property type="protein sequence ID" value="ABS68466.1"/>
    <property type="molecule type" value="Genomic_DNA"/>
</dbReference>
<dbReference type="SMR" id="A7IKC3"/>
<dbReference type="STRING" id="78245.Xaut_3237"/>
<dbReference type="KEGG" id="xau:Xaut_3237"/>
<dbReference type="eggNOG" id="COG2156">
    <property type="taxonomic scope" value="Bacteria"/>
</dbReference>
<dbReference type="HOGENOM" id="CLU_077094_2_0_5"/>
<dbReference type="OrthoDB" id="9788285at2"/>
<dbReference type="PhylomeDB" id="A7IKC3"/>
<dbReference type="Proteomes" id="UP000002417">
    <property type="component" value="Chromosome"/>
</dbReference>
<dbReference type="GO" id="GO:0005886">
    <property type="term" value="C:plasma membrane"/>
    <property type="evidence" value="ECO:0007669"/>
    <property type="project" value="UniProtKB-SubCell"/>
</dbReference>
<dbReference type="GO" id="GO:0005524">
    <property type="term" value="F:ATP binding"/>
    <property type="evidence" value="ECO:0007669"/>
    <property type="project" value="UniProtKB-UniRule"/>
</dbReference>
<dbReference type="GO" id="GO:0008556">
    <property type="term" value="F:P-type potassium transmembrane transporter activity"/>
    <property type="evidence" value="ECO:0007669"/>
    <property type="project" value="InterPro"/>
</dbReference>
<dbReference type="HAMAP" id="MF_00276">
    <property type="entry name" value="KdpC"/>
    <property type="match status" value="1"/>
</dbReference>
<dbReference type="InterPro" id="IPR003820">
    <property type="entry name" value="KdpC"/>
</dbReference>
<dbReference type="NCBIfam" id="TIGR00681">
    <property type="entry name" value="kdpC"/>
    <property type="match status" value="1"/>
</dbReference>
<dbReference type="NCBIfam" id="NF001454">
    <property type="entry name" value="PRK00315.1"/>
    <property type="match status" value="1"/>
</dbReference>
<dbReference type="NCBIfam" id="NF010603">
    <property type="entry name" value="PRK13999.1"/>
    <property type="match status" value="1"/>
</dbReference>
<dbReference type="PANTHER" id="PTHR30042">
    <property type="entry name" value="POTASSIUM-TRANSPORTING ATPASE C CHAIN"/>
    <property type="match status" value="1"/>
</dbReference>
<dbReference type="PANTHER" id="PTHR30042:SF2">
    <property type="entry name" value="POTASSIUM-TRANSPORTING ATPASE KDPC SUBUNIT"/>
    <property type="match status" value="1"/>
</dbReference>
<dbReference type="Pfam" id="PF02669">
    <property type="entry name" value="KdpC"/>
    <property type="match status" value="1"/>
</dbReference>
<dbReference type="PIRSF" id="PIRSF001296">
    <property type="entry name" value="K_ATPase_KdpC"/>
    <property type="match status" value="1"/>
</dbReference>
<organism>
    <name type="scientific">Xanthobacter autotrophicus (strain ATCC BAA-1158 / Py2)</name>
    <dbReference type="NCBI Taxonomy" id="78245"/>
    <lineage>
        <taxon>Bacteria</taxon>
        <taxon>Pseudomonadati</taxon>
        <taxon>Pseudomonadota</taxon>
        <taxon>Alphaproteobacteria</taxon>
        <taxon>Hyphomicrobiales</taxon>
        <taxon>Xanthobacteraceae</taxon>
        <taxon>Xanthobacter</taxon>
    </lineage>
</organism>
<protein>
    <recommendedName>
        <fullName evidence="1">Potassium-transporting ATPase KdpC subunit</fullName>
    </recommendedName>
    <alternativeName>
        <fullName evidence="1">ATP phosphohydrolase [potassium-transporting] C chain</fullName>
    </alternativeName>
    <alternativeName>
        <fullName evidence="1">Potassium-binding and translocating subunit C</fullName>
    </alternativeName>
    <alternativeName>
        <fullName evidence="1">Potassium-translocating ATPase C chain</fullName>
    </alternativeName>
</protein>